<evidence type="ECO:0000255" key="1">
    <source>
        <dbReference type="HAMAP-Rule" id="MF_01302"/>
    </source>
</evidence>
<evidence type="ECO:0000305" key="2"/>
<proteinExistence type="inferred from homology"/>
<name>RS8_PSYIN</name>
<dbReference type="EMBL" id="CP000510">
    <property type="protein sequence ID" value="ABM05193.1"/>
    <property type="molecule type" value="Genomic_DNA"/>
</dbReference>
<dbReference type="RefSeq" id="WP_011771741.1">
    <property type="nucleotide sequence ID" value="NC_008709.1"/>
</dbReference>
<dbReference type="SMR" id="A1T0C8"/>
<dbReference type="STRING" id="357804.Ping_3510"/>
<dbReference type="KEGG" id="pin:Ping_3510"/>
<dbReference type="eggNOG" id="COG0096">
    <property type="taxonomic scope" value="Bacteria"/>
</dbReference>
<dbReference type="HOGENOM" id="CLU_098428_0_0_6"/>
<dbReference type="OrthoDB" id="9802617at2"/>
<dbReference type="Proteomes" id="UP000000639">
    <property type="component" value="Chromosome"/>
</dbReference>
<dbReference type="GO" id="GO:1990904">
    <property type="term" value="C:ribonucleoprotein complex"/>
    <property type="evidence" value="ECO:0007669"/>
    <property type="project" value="UniProtKB-KW"/>
</dbReference>
<dbReference type="GO" id="GO:0005840">
    <property type="term" value="C:ribosome"/>
    <property type="evidence" value="ECO:0007669"/>
    <property type="project" value="UniProtKB-KW"/>
</dbReference>
<dbReference type="GO" id="GO:0019843">
    <property type="term" value="F:rRNA binding"/>
    <property type="evidence" value="ECO:0007669"/>
    <property type="project" value="UniProtKB-UniRule"/>
</dbReference>
<dbReference type="GO" id="GO:0003735">
    <property type="term" value="F:structural constituent of ribosome"/>
    <property type="evidence" value="ECO:0007669"/>
    <property type="project" value="InterPro"/>
</dbReference>
<dbReference type="GO" id="GO:0006412">
    <property type="term" value="P:translation"/>
    <property type="evidence" value="ECO:0007669"/>
    <property type="project" value="UniProtKB-UniRule"/>
</dbReference>
<dbReference type="FunFam" id="3.30.1370.30:FF:000003">
    <property type="entry name" value="30S ribosomal protein S8"/>
    <property type="match status" value="1"/>
</dbReference>
<dbReference type="FunFam" id="3.30.1490.10:FF:000001">
    <property type="entry name" value="30S ribosomal protein S8"/>
    <property type="match status" value="1"/>
</dbReference>
<dbReference type="Gene3D" id="3.30.1370.30">
    <property type="match status" value="1"/>
</dbReference>
<dbReference type="Gene3D" id="3.30.1490.10">
    <property type="match status" value="1"/>
</dbReference>
<dbReference type="HAMAP" id="MF_01302_B">
    <property type="entry name" value="Ribosomal_uS8_B"/>
    <property type="match status" value="1"/>
</dbReference>
<dbReference type="InterPro" id="IPR000630">
    <property type="entry name" value="Ribosomal_uS8"/>
</dbReference>
<dbReference type="InterPro" id="IPR047863">
    <property type="entry name" value="Ribosomal_uS8_CS"/>
</dbReference>
<dbReference type="InterPro" id="IPR035987">
    <property type="entry name" value="Ribosomal_uS8_sf"/>
</dbReference>
<dbReference type="NCBIfam" id="NF001109">
    <property type="entry name" value="PRK00136.1"/>
    <property type="match status" value="1"/>
</dbReference>
<dbReference type="PANTHER" id="PTHR11758">
    <property type="entry name" value="40S RIBOSOMAL PROTEIN S15A"/>
    <property type="match status" value="1"/>
</dbReference>
<dbReference type="Pfam" id="PF00410">
    <property type="entry name" value="Ribosomal_S8"/>
    <property type="match status" value="1"/>
</dbReference>
<dbReference type="SUPFAM" id="SSF56047">
    <property type="entry name" value="Ribosomal protein S8"/>
    <property type="match status" value="1"/>
</dbReference>
<dbReference type="PROSITE" id="PS00053">
    <property type="entry name" value="RIBOSOMAL_S8"/>
    <property type="match status" value="1"/>
</dbReference>
<reference key="1">
    <citation type="journal article" date="2008" name="BMC Genomics">
        <title>Genomics of an extreme psychrophile, Psychromonas ingrahamii.</title>
        <authorList>
            <person name="Riley M."/>
            <person name="Staley J.T."/>
            <person name="Danchin A."/>
            <person name="Wang T.Z."/>
            <person name="Brettin T.S."/>
            <person name="Hauser L.J."/>
            <person name="Land M.L."/>
            <person name="Thompson L.S."/>
        </authorList>
    </citation>
    <scope>NUCLEOTIDE SEQUENCE [LARGE SCALE GENOMIC DNA]</scope>
    <source>
        <strain>DSM 17664 / CCUG 51855 / 37</strain>
    </source>
</reference>
<gene>
    <name evidence="1" type="primary">rpsH</name>
    <name type="ordered locus">Ping_3510</name>
</gene>
<sequence>MSMQDPISDMLTRIRNGQAASKVSVKMPSSKQKVAIAAVLKAEGYVTEFVVAGDTKPELEVTLKYFEGKKVIDTIKRVSRPGLRIYKGANDLPKVMAGLGIAIISTSHGVMTDRAARKASIGGEIICYVS</sequence>
<feature type="chain" id="PRO_0000290907" description="Small ribosomal subunit protein uS8">
    <location>
        <begin position="1"/>
        <end position="130"/>
    </location>
</feature>
<protein>
    <recommendedName>
        <fullName evidence="1">Small ribosomal subunit protein uS8</fullName>
    </recommendedName>
    <alternativeName>
        <fullName evidence="2">30S ribosomal protein S8</fullName>
    </alternativeName>
</protein>
<organism>
    <name type="scientific">Psychromonas ingrahamii (strain DSM 17664 / CCUG 51855 / 37)</name>
    <dbReference type="NCBI Taxonomy" id="357804"/>
    <lineage>
        <taxon>Bacteria</taxon>
        <taxon>Pseudomonadati</taxon>
        <taxon>Pseudomonadota</taxon>
        <taxon>Gammaproteobacteria</taxon>
        <taxon>Alteromonadales</taxon>
        <taxon>Psychromonadaceae</taxon>
        <taxon>Psychromonas</taxon>
    </lineage>
</organism>
<accession>A1T0C8</accession>
<keyword id="KW-1185">Reference proteome</keyword>
<keyword id="KW-0687">Ribonucleoprotein</keyword>
<keyword id="KW-0689">Ribosomal protein</keyword>
<keyword id="KW-0694">RNA-binding</keyword>
<keyword id="KW-0699">rRNA-binding</keyword>
<comment type="function">
    <text evidence="1">One of the primary rRNA binding proteins, it binds directly to 16S rRNA central domain where it helps coordinate assembly of the platform of the 30S subunit.</text>
</comment>
<comment type="subunit">
    <text evidence="1">Part of the 30S ribosomal subunit. Contacts proteins S5 and S12.</text>
</comment>
<comment type="similarity">
    <text evidence="1">Belongs to the universal ribosomal protein uS8 family.</text>
</comment>